<keyword id="KW-0007">Acetylation</keyword>
<keyword id="KW-0025">Alternative splicing</keyword>
<keyword id="KW-0963">Cytoplasm</keyword>
<keyword id="KW-0597">Phosphoprotein</keyword>
<keyword id="KW-0650">Protein phosphatase inhibitor</keyword>
<keyword id="KW-1185">Reference proteome</keyword>
<feature type="chain" id="PRO_0000071474" description="Protein phosphatase 1 regulatory subunit 1B">
    <location>
        <begin position="1"/>
        <end position="194"/>
    </location>
</feature>
<feature type="region of interest" description="Disordered" evidence="4">
    <location>
        <begin position="1"/>
        <end position="194"/>
    </location>
</feature>
<feature type="compositionally biased region" description="Basic and acidic residues" evidence="4">
    <location>
        <begin position="41"/>
        <end position="63"/>
    </location>
</feature>
<feature type="compositionally biased region" description="Polar residues" evidence="4">
    <location>
        <begin position="84"/>
        <end position="95"/>
    </location>
</feature>
<feature type="compositionally biased region" description="Acidic residues" evidence="4">
    <location>
        <begin position="113"/>
        <end position="131"/>
    </location>
</feature>
<feature type="compositionally biased region" description="Basic and acidic residues" evidence="4">
    <location>
        <begin position="160"/>
        <end position="170"/>
    </location>
</feature>
<feature type="modified residue" description="N-acetylmethionine" evidence="2">
    <location>
        <position position="1"/>
    </location>
</feature>
<feature type="modified residue" description="Phosphothreonine; by PKA" evidence="2">
    <location>
        <position position="34"/>
    </location>
</feature>
<feature type="modified residue" description="Phosphoserine" evidence="7">
    <location>
        <position position="45"/>
    </location>
</feature>
<feature type="modified residue" description="Phosphoserine" evidence="7">
    <location>
        <position position="46"/>
    </location>
</feature>
<feature type="modified residue" description="Phosphothreonine" evidence="7">
    <location>
        <position position="75"/>
    </location>
</feature>
<feature type="modified residue" description="Phosphoserine" evidence="7">
    <location>
        <position position="97"/>
    </location>
</feature>
<feature type="modified residue" description="Phosphoserine" evidence="3">
    <location>
        <position position="130"/>
    </location>
</feature>
<feature type="modified residue" description="Phosphoserine" evidence="7">
    <location>
        <position position="192"/>
    </location>
</feature>
<feature type="splice variant" id="VSP_025058" description="In isoform 2." evidence="5">
    <location>
        <begin position="1"/>
        <end position="36"/>
    </location>
</feature>
<evidence type="ECO:0000250" key="1"/>
<evidence type="ECO:0000250" key="2">
    <source>
        <dbReference type="UniProtKB" id="P07516"/>
    </source>
</evidence>
<evidence type="ECO:0000250" key="3">
    <source>
        <dbReference type="UniProtKB" id="Q6J4I0"/>
    </source>
</evidence>
<evidence type="ECO:0000256" key="4">
    <source>
        <dbReference type="SAM" id="MobiDB-lite"/>
    </source>
</evidence>
<evidence type="ECO:0000303" key="5">
    <source ref="1"/>
</evidence>
<evidence type="ECO:0000305" key="6"/>
<evidence type="ECO:0007744" key="7">
    <source>
    </source>
</evidence>
<protein>
    <recommendedName>
        <fullName>Protein phosphatase 1 regulatory subunit 1B</fullName>
    </recommendedName>
    <alternativeName>
        <fullName>DARPP-32</fullName>
    </alternativeName>
    <alternativeName>
        <fullName>Dopamine- and cAMP-regulated neuronal phosphoprotein</fullName>
    </alternativeName>
</protein>
<dbReference type="EMBL" id="AY640620">
    <property type="protein sequence ID" value="AAT66920.1"/>
    <property type="molecule type" value="mRNA"/>
</dbReference>
<dbReference type="EMBL" id="AY640621">
    <property type="protein sequence ID" value="AAT66921.1"/>
    <property type="molecule type" value="mRNA"/>
</dbReference>
<dbReference type="EMBL" id="AL591390">
    <property type="status" value="NOT_ANNOTATED_CDS"/>
    <property type="molecule type" value="Genomic_DNA"/>
</dbReference>
<dbReference type="EMBL" id="BC011122">
    <property type="protein sequence ID" value="AAH11122.1"/>
    <property type="molecule type" value="mRNA"/>
</dbReference>
<dbReference type="EMBL" id="BC026568">
    <property type="protein sequence ID" value="AAH26568.1"/>
    <property type="molecule type" value="mRNA"/>
</dbReference>
<dbReference type="EMBL" id="BC031129">
    <property type="protein sequence ID" value="AAH31129.1"/>
    <property type="molecule type" value="mRNA"/>
</dbReference>
<dbReference type="EMBL" id="U23160">
    <property type="protein sequence ID" value="AAA93223.1"/>
    <property type="molecule type" value="Genomic_DNA"/>
</dbReference>
<dbReference type="EMBL" id="AK141563">
    <property type="protein sequence ID" value="BAE24736.1"/>
    <property type="molecule type" value="mRNA"/>
</dbReference>
<dbReference type="CCDS" id="CCDS25344.1">
    <molecule id="Q60829-1"/>
</dbReference>
<dbReference type="CCDS" id="CCDS83889.1">
    <molecule id="Q60829-2"/>
</dbReference>
<dbReference type="RefSeq" id="NP_001300899.1">
    <molecule id="Q60829-2"/>
    <property type="nucleotide sequence ID" value="NM_001313970.1"/>
</dbReference>
<dbReference type="RefSeq" id="NP_659077.1">
    <molecule id="Q60829-1"/>
    <property type="nucleotide sequence ID" value="NM_144828.2"/>
</dbReference>
<dbReference type="SMR" id="Q60829"/>
<dbReference type="BioGRID" id="202338">
    <property type="interactions" value="3"/>
</dbReference>
<dbReference type="FunCoup" id="Q60829">
    <property type="interactions" value="242"/>
</dbReference>
<dbReference type="STRING" id="10090.ENSMUSP00000077760"/>
<dbReference type="GlyGen" id="Q60829">
    <property type="glycosylation" value="1 site, 1 N-linked glycan (1 site)"/>
</dbReference>
<dbReference type="iPTMnet" id="Q60829"/>
<dbReference type="PhosphoSitePlus" id="Q60829"/>
<dbReference type="SwissPalm" id="Q60829"/>
<dbReference type="PaxDb" id="10090-ENSMUSP00000077760"/>
<dbReference type="PeptideAtlas" id="Q60829"/>
<dbReference type="ProteomicsDB" id="291836">
    <molecule id="Q60829-1"/>
</dbReference>
<dbReference type="ProteomicsDB" id="291837">
    <molecule id="Q60829-2"/>
</dbReference>
<dbReference type="Antibodypedia" id="28294">
    <property type="antibodies" value="767 antibodies from 41 providers"/>
</dbReference>
<dbReference type="DNASU" id="19049"/>
<dbReference type="Ensembl" id="ENSMUST00000078694.13">
    <molecule id="Q60829-1"/>
    <property type="protein sequence ID" value="ENSMUSP00000077760.7"/>
    <property type="gene ID" value="ENSMUSG00000061718.13"/>
</dbReference>
<dbReference type="Ensembl" id="ENSMUST00000137634.2">
    <molecule id="Q60829-2"/>
    <property type="protein sequence ID" value="ENSMUSP00000123528.2"/>
    <property type="gene ID" value="ENSMUSG00000061718.13"/>
</dbReference>
<dbReference type="Ensembl" id="ENSMUST00000150762.8">
    <molecule id="Q60829-2"/>
    <property type="protein sequence ID" value="ENSMUSP00000121147.2"/>
    <property type="gene ID" value="ENSMUSG00000061718.13"/>
</dbReference>
<dbReference type="GeneID" id="19049"/>
<dbReference type="KEGG" id="mmu:19049"/>
<dbReference type="UCSC" id="uc007lfz.1">
    <molecule id="Q60829-1"/>
    <property type="organism name" value="mouse"/>
</dbReference>
<dbReference type="AGR" id="MGI:94860"/>
<dbReference type="CTD" id="84152"/>
<dbReference type="MGI" id="MGI:94860">
    <property type="gene designation" value="Ppp1r1b"/>
</dbReference>
<dbReference type="VEuPathDB" id="HostDB:ENSMUSG00000061718"/>
<dbReference type="eggNOG" id="ENOG502S19Z">
    <property type="taxonomic scope" value="Eukaryota"/>
</dbReference>
<dbReference type="GeneTree" id="ENSGT00730000111283"/>
<dbReference type="HOGENOM" id="CLU_092269_3_0_1"/>
<dbReference type="InParanoid" id="Q60829"/>
<dbReference type="OMA" id="EDPCEGD"/>
<dbReference type="OrthoDB" id="9946890at2759"/>
<dbReference type="PhylomeDB" id="Q60829"/>
<dbReference type="TreeFam" id="TF332576"/>
<dbReference type="Reactome" id="R-MMU-180024">
    <property type="pathway name" value="DARPP-32 events"/>
</dbReference>
<dbReference type="BioGRID-ORCS" id="19049">
    <property type="hits" value="5 hits in 80 CRISPR screens"/>
</dbReference>
<dbReference type="CD-CODE" id="CE726F99">
    <property type="entry name" value="Postsynaptic density"/>
</dbReference>
<dbReference type="ChiTaRS" id="Ppp1r1b">
    <property type="organism name" value="mouse"/>
</dbReference>
<dbReference type="PRO" id="PR:Q60829"/>
<dbReference type="Proteomes" id="UP000000589">
    <property type="component" value="Chromosome 11"/>
</dbReference>
<dbReference type="RNAct" id="Q60829">
    <property type="molecule type" value="protein"/>
</dbReference>
<dbReference type="Bgee" id="ENSMUSG00000061718">
    <property type="expression patterns" value="Expressed in caudate-putamen and 111 other cell types or tissues"/>
</dbReference>
<dbReference type="GO" id="GO:0005737">
    <property type="term" value="C:cytoplasm"/>
    <property type="evidence" value="ECO:0000314"/>
    <property type="project" value="MGI"/>
</dbReference>
<dbReference type="GO" id="GO:0005829">
    <property type="term" value="C:cytosol"/>
    <property type="evidence" value="ECO:0000314"/>
    <property type="project" value="MGI"/>
</dbReference>
<dbReference type="GO" id="GO:0043025">
    <property type="term" value="C:neuronal cell body"/>
    <property type="evidence" value="ECO:0000314"/>
    <property type="project" value="MGI"/>
</dbReference>
<dbReference type="GO" id="GO:0005634">
    <property type="term" value="C:nucleus"/>
    <property type="evidence" value="ECO:0000314"/>
    <property type="project" value="MGI"/>
</dbReference>
<dbReference type="GO" id="GO:0004864">
    <property type="term" value="F:protein phosphatase inhibitor activity"/>
    <property type="evidence" value="ECO:0000304"/>
    <property type="project" value="MGI"/>
</dbReference>
<dbReference type="GO" id="GO:0004865">
    <property type="term" value="F:protein serine/threonine phosphatase inhibitor activity"/>
    <property type="evidence" value="ECO:0000304"/>
    <property type="project" value="MGI"/>
</dbReference>
<dbReference type="GO" id="GO:0048148">
    <property type="term" value="P:behavioral response to cocaine"/>
    <property type="evidence" value="ECO:0000315"/>
    <property type="project" value="MGI"/>
</dbReference>
<dbReference type="GO" id="GO:0071314">
    <property type="term" value="P:cellular response to cocaine"/>
    <property type="evidence" value="ECO:0000315"/>
    <property type="project" value="MGI"/>
</dbReference>
<dbReference type="GO" id="GO:0006351">
    <property type="term" value="P:DNA-templated transcription"/>
    <property type="evidence" value="ECO:0000315"/>
    <property type="project" value="MGI"/>
</dbReference>
<dbReference type="GO" id="GO:0007626">
    <property type="term" value="P:locomotory behavior"/>
    <property type="evidence" value="ECO:0000315"/>
    <property type="project" value="MGI"/>
</dbReference>
<dbReference type="GO" id="GO:0007621">
    <property type="term" value="P:negative regulation of female receptivity"/>
    <property type="evidence" value="ECO:0000314"/>
    <property type="project" value="MGI"/>
</dbReference>
<dbReference type="GO" id="GO:0001975">
    <property type="term" value="P:response to amphetamine"/>
    <property type="evidence" value="ECO:0000315"/>
    <property type="project" value="MGI"/>
</dbReference>
<dbReference type="GO" id="GO:0043278">
    <property type="term" value="P:response to morphine"/>
    <property type="evidence" value="ECO:0000315"/>
    <property type="project" value="MGI"/>
</dbReference>
<dbReference type="GO" id="GO:0007165">
    <property type="term" value="P:signal transduction"/>
    <property type="evidence" value="ECO:0007669"/>
    <property type="project" value="InterPro"/>
</dbReference>
<dbReference type="GO" id="GO:0008542">
    <property type="term" value="P:visual learning"/>
    <property type="evidence" value="ECO:0000316"/>
    <property type="project" value="MGI"/>
</dbReference>
<dbReference type="InterPro" id="IPR008466">
    <property type="entry name" value="PPP1R1A/B/C"/>
</dbReference>
<dbReference type="PANTHER" id="PTHR15417:SF2">
    <property type="entry name" value="PROTEIN PHOSPHATASE 1 REGULATORY SUBUNIT 1B"/>
    <property type="match status" value="1"/>
</dbReference>
<dbReference type="PANTHER" id="PTHR15417">
    <property type="entry name" value="PROTEIN PHOSPHATASE INHIBITOR AND DOPAMINE- AND CAMP-REGULATED NEURONAL PHOSPHOPROTEIN"/>
    <property type="match status" value="1"/>
</dbReference>
<dbReference type="Pfam" id="PF05395">
    <property type="entry name" value="DARPP-32"/>
    <property type="match status" value="1"/>
</dbReference>
<organism>
    <name type="scientific">Mus musculus</name>
    <name type="common">Mouse</name>
    <dbReference type="NCBI Taxonomy" id="10090"/>
    <lineage>
        <taxon>Eukaryota</taxon>
        <taxon>Metazoa</taxon>
        <taxon>Chordata</taxon>
        <taxon>Craniata</taxon>
        <taxon>Vertebrata</taxon>
        <taxon>Euteleostomi</taxon>
        <taxon>Mammalia</taxon>
        <taxon>Eutheria</taxon>
        <taxon>Euarchontoglires</taxon>
        <taxon>Glires</taxon>
        <taxon>Rodentia</taxon>
        <taxon>Myomorpha</taxon>
        <taxon>Muroidea</taxon>
        <taxon>Muridae</taxon>
        <taxon>Murinae</taxon>
        <taxon>Mus</taxon>
        <taxon>Mus</taxon>
    </lineage>
</organism>
<accession>Q60829</accession>
<accession>A2A564</accession>
<accession>Q3URF2</accession>
<accession>Q6DV86</accession>
<accession>Q91XB5</accession>
<sequence>MDPKDRKKIQFSVPAPPSQLDPRQVEMIRRRRPTPAMLFRVSEHSSPEEEASPHQRTSGEGHHPKSKRPNPCAYTPPSLKAVQHLQTISNLSENQASEEEDELGELRELGYPQEDDEEDEDEEEDEEEDSQAEVLKGSRGTVGQKPTCGRGLEGPWERPPPLDEPQRDGNSEDQVEGRATLSEPGEEPQHPSPP</sequence>
<proteinExistence type="evidence at protein level"/>
<reference key="1">
    <citation type="submission" date="2004-05" db="EMBL/GenBank/DDBJ databases">
        <authorList>
            <person name="Liu Q.-R."/>
            <person name="Uhl G.R."/>
        </authorList>
    </citation>
    <scope>NUCLEOTIDE SEQUENCE [MRNA] (ISOFORM 2)</scope>
    <source>
        <strain>C57BL/6J</strain>
    </source>
</reference>
<reference key="2">
    <citation type="journal article" date="2009" name="PLoS Biol.">
        <title>Lineage-specific biology revealed by a finished genome assembly of the mouse.</title>
        <authorList>
            <person name="Church D.M."/>
            <person name="Goodstadt L."/>
            <person name="Hillier L.W."/>
            <person name="Zody M.C."/>
            <person name="Goldstein S."/>
            <person name="She X."/>
            <person name="Bult C.J."/>
            <person name="Agarwala R."/>
            <person name="Cherry J.L."/>
            <person name="DiCuccio M."/>
            <person name="Hlavina W."/>
            <person name="Kapustin Y."/>
            <person name="Meric P."/>
            <person name="Maglott D."/>
            <person name="Birtle Z."/>
            <person name="Marques A.C."/>
            <person name="Graves T."/>
            <person name="Zhou S."/>
            <person name="Teague B."/>
            <person name="Potamousis K."/>
            <person name="Churas C."/>
            <person name="Place M."/>
            <person name="Herschleb J."/>
            <person name="Runnheim R."/>
            <person name="Forrest D."/>
            <person name="Amos-Landgraf J."/>
            <person name="Schwartz D.C."/>
            <person name="Cheng Z."/>
            <person name="Lindblad-Toh K."/>
            <person name="Eichler E.E."/>
            <person name="Ponting C.P."/>
        </authorList>
    </citation>
    <scope>NUCLEOTIDE SEQUENCE [LARGE SCALE GENOMIC DNA]</scope>
    <source>
        <strain>C57BL/6J</strain>
    </source>
</reference>
<reference key="3">
    <citation type="journal article" date="2004" name="Genome Res.">
        <title>The status, quality, and expansion of the NIH full-length cDNA project: the Mammalian Gene Collection (MGC).</title>
        <authorList>
            <consortium name="The MGC Project Team"/>
        </authorList>
    </citation>
    <scope>NUCLEOTIDE SEQUENCE [LARGE SCALE MRNA] (ISOFORM 1)</scope>
    <source>
        <tissue>Colon</tissue>
        <tissue>Salivary gland</tissue>
    </source>
</reference>
<reference key="4">
    <citation type="journal article" date="1995" name="Am. J. Physiol.">
        <title>DARPP-32 promoter directs transgene expression to renal thick ascending limb of loop of Henle.</title>
        <authorList>
            <person name="Blau S."/>
            <person name="Daly L."/>
            <person name="Fienberg A."/>
            <person name="Teitelman G."/>
            <person name="Ehrlich M.E."/>
        </authorList>
    </citation>
    <scope>NUCLEOTIDE SEQUENCE [GENOMIC DNA] OF 1-27</scope>
    <source>
        <strain>BALB/cJ</strain>
    </source>
</reference>
<reference key="5">
    <citation type="journal article" date="2005" name="Science">
        <title>The transcriptional landscape of the mammalian genome.</title>
        <authorList>
            <person name="Carninci P."/>
            <person name="Kasukawa T."/>
            <person name="Katayama S."/>
            <person name="Gough J."/>
            <person name="Frith M.C."/>
            <person name="Maeda N."/>
            <person name="Oyama R."/>
            <person name="Ravasi T."/>
            <person name="Lenhard B."/>
            <person name="Wells C."/>
            <person name="Kodzius R."/>
            <person name="Shimokawa K."/>
            <person name="Bajic V.B."/>
            <person name="Brenner S.E."/>
            <person name="Batalov S."/>
            <person name="Forrest A.R."/>
            <person name="Zavolan M."/>
            <person name="Davis M.J."/>
            <person name="Wilming L.G."/>
            <person name="Aidinis V."/>
            <person name="Allen J.E."/>
            <person name="Ambesi-Impiombato A."/>
            <person name="Apweiler R."/>
            <person name="Aturaliya R.N."/>
            <person name="Bailey T.L."/>
            <person name="Bansal M."/>
            <person name="Baxter L."/>
            <person name="Beisel K.W."/>
            <person name="Bersano T."/>
            <person name="Bono H."/>
            <person name="Chalk A.M."/>
            <person name="Chiu K.P."/>
            <person name="Choudhary V."/>
            <person name="Christoffels A."/>
            <person name="Clutterbuck D.R."/>
            <person name="Crowe M.L."/>
            <person name="Dalla E."/>
            <person name="Dalrymple B.P."/>
            <person name="de Bono B."/>
            <person name="Della Gatta G."/>
            <person name="di Bernardo D."/>
            <person name="Down T."/>
            <person name="Engstrom P."/>
            <person name="Fagiolini M."/>
            <person name="Faulkner G."/>
            <person name="Fletcher C.F."/>
            <person name="Fukushima T."/>
            <person name="Furuno M."/>
            <person name="Futaki S."/>
            <person name="Gariboldi M."/>
            <person name="Georgii-Hemming P."/>
            <person name="Gingeras T.R."/>
            <person name="Gojobori T."/>
            <person name="Green R.E."/>
            <person name="Gustincich S."/>
            <person name="Harbers M."/>
            <person name="Hayashi Y."/>
            <person name="Hensch T.K."/>
            <person name="Hirokawa N."/>
            <person name="Hill D."/>
            <person name="Huminiecki L."/>
            <person name="Iacono M."/>
            <person name="Ikeo K."/>
            <person name="Iwama A."/>
            <person name="Ishikawa T."/>
            <person name="Jakt M."/>
            <person name="Kanapin A."/>
            <person name="Katoh M."/>
            <person name="Kawasawa Y."/>
            <person name="Kelso J."/>
            <person name="Kitamura H."/>
            <person name="Kitano H."/>
            <person name="Kollias G."/>
            <person name="Krishnan S.P."/>
            <person name="Kruger A."/>
            <person name="Kummerfeld S.K."/>
            <person name="Kurochkin I.V."/>
            <person name="Lareau L.F."/>
            <person name="Lazarevic D."/>
            <person name="Lipovich L."/>
            <person name="Liu J."/>
            <person name="Liuni S."/>
            <person name="McWilliam S."/>
            <person name="Madan Babu M."/>
            <person name="Madera M."/>
            <person name="Marchionni L."/>
            <person name="Matsuda H."/>
            <person name="Matsuzawa S."/>
            <person name="Miki H."/>
            <person name="Mignone F."/>
            <person name="Miyake S."/>
            <person name="Morris K."/>
            <person name="Mottagui-Tabar S."/>
            <person name="Mulder N."/>
            <person name="Nakano N."/>
            <person name="Nakauchi H."/>
            <person name="Ng P."/>
            <person name="Nilsson R."/>
            <person name="Nishiguchi S."/>
            <person name="Nishikawa S."/>
            <person name="Nori F."/>
            <person name="Ohara O."/>
            <person name="Okazaki Y."/>
            <person name="Orlando V."/>
            <person name="Pang K.C."/>
            <person name="Pavan W.J."/>
            <person name="Pavesi G."/>
            <person name="Pesole G."/>
            <person name="Petrovsky N."/>
            <person name="Piazza S."/>
            <person name="Reed J."/>
            <person name="Reid J.F."/>
            <person name="Ring B.Z."/>
            <person name="Ringwald M."/>
            <person name="Rost B."/>
            <person name="Ruan Y."/>
            <person name="Salzberg S.L."/>
            <person name="Sandelin A."/>
            <person name="Schneider C."/>
            <person name="Schoenbach C."/>
            <person name="Sekiguchi K."/>
            <person name="Semple C.A."/>
            <person name="Seno S."/>
            <person name="Sessa L."/>
            <person name="Sheng Y."/>
            <person name="Shibata Y."/>
            <person name="Shimada H."/>
            <person name="Shimada K."/>
            <person name="Silva D."/>
            <person name="Sinclair B."/>
            <person name="Sperling S."/>
            <person name="Stupka E."/>
            <person name="Sugiura K."/>
            <person name="Sultana R."/>
            <person name="Takenaka Y."/>
            <person name="Taki K."/>
            <person name="Tammoja K."/>
            <person name="Tan S.L."/>
            <person name="Tang S."/>
            <person name="Taylor M.S."/>
            <person name="Tegner J."/>
            <person name="Teichmann S.A."/>
            <person name="Ueda H.R."/>
            <person name="van Nimwegen E."/>
            <person name="Verardo R."/>
            <person name="Wei C.L."/>
            <person name="Yagi K."/>
            <person name="Yamanishi H."/>
            <person name="Zabarovsky E."/>
            <person name="Zhu S."/>
            <person name="Zimmer A."/>
            <person name="Hide W."/>
            <person name="Bult C."/>
            <person name="Grimmond S.M."/>
            <person name="Teasdale R.D."/>
            <person name="Liu E.T."/>
            <person name="Brusic V."/>
            <person name="Quackenbush J."/>
            <person name="Wahlestedt C."/>
            <person name="Mattick J.S."/>
            <person name="Hume D.A."/>
            <person name="Kai C."/>
            <person name="Sasaki D."/>
            <person name="Tomaru Y."/>
            <person name="Fukuda S."/>
            <person name="Kanamori-Katayama M."/>
            <person name="Suzuki M."/>
            <person name="Aoki J."/>
            <person name="Arakawa T."/>
            <person name="Iida J."/>
            <person name="Imamura K."/>
            <person name="Itoh M."/>
            <person name="Kato T."/>
            <person name="Kawaji H."/>
            <person name="Kawagashira N."/>
            <person name="Kawashima T."/>
            <person name="Kojima M."/>
            <person name="Kondo S."/>
            <person name="Konno H."/>
            <person name="Nakano K."/>
            <person name="Ninomiya N."/>
            <person name="Nishio T."/>
            <person name="Okada M."/>
            <person name="Plessy C."/>
            <person name="Shibata K."/>
            <person name="Shiraki T."/>
            <person name="Suzuki S."/>
            <person name="Tagami M."/>
            <person name="Waki K."/>
            <person name="Watahiki A."/>
            <person name="Okamura-Oho Y."/>
            <person name="Suzuki H."/>
            <person name="Kawai J."/>
            <person name="Hayashizaki Y."/>
        </authorList>
    </citation>
    <scope>NUCLEOTIDE SEQUENCE [LARGE SCALE MRNA] OF 48-194</scope>
    <source>
        <strain>C57BL/6J</strain>
        <tissue>Hippocampus</tissue>
    </source>
</reference>
<reference key="6">
    <citation type="journal article" date="2010" name="Cell">
        <title>A tissue-specific atlas of mouse protein phosphorylation and expression.</title>
        <authorList>
            <person name="Huttlin E.L."/>
            <person name="Jedrychowski M.P."/>
            <person name="Elias J.E."/>
            <person name="Goswami T."/>
            <person name="Rad R."/>
            <person name="Beausoleil S.A."/>
            <person name="Villen J."/>
            <person name="Haas W."/>
            <person name="Sowa M.E."/>
            <person name="Gygi S.P."/>
        </authorList>
    </citation>
    <scope>PHOSPHORYLATION [LARGE SCALE ANALYSIS] AT SER-45; SER-46; THR-75; SER-97 AND SER-192</scope>
    <scope>IDENTIFICATION BY MASS SPECTROMETRY [LARGE SCALE ANALYSIS]</scope>
    <source>
        <tissue>Brain</tissue>
        <tissue>Heart</tissue>
        <tissue>Kidney</tissue>
        <tissue>Lung</tissue>
        <tissue>Pancreas</tissue>
    </source>
</reference>
<gene>
    <name type="primary">Ppp1r1b</name>
</gene>
<comment type="function">
    <text>Inhibitor of protein-phosphatase 1.</text>
</comment>
<comment type="subcellular location">
    <subcellularLocation>
        <location>Cytoplasm</location>
    </subcellularLocation>
</comment>
<comment type="alternative products">
    <event type="alternative splicing"/>
    <isoform>
        <id>Q60829-1</id>
        <name>1</name>
        <sequence type="displayed"/>
    </isoform>
    <isoform>
        <id>Q60829-2</id>
        <name>2</name>
        <name>DARPP-30</name>
        <sequence type="described" ref="VSP_025058"/>
    </isoform>
</comment>
<comment type="PTM">
    <text evidence="1">Dopamine- and cyclic AMP-regulated neuronal phosphoprotein.</text>
</comment>
<comment type="PTM">
    <text evidence="1">Phosphorylation of Thr-34 is required for activity.</text>
</comment>
<comment type="similarity">
    <text evidence="6">Belongs to the protein phosphatase inhibitor 1 family.</text>
</comment>
<name>PPR1B_MOUSE</name>